<accession>Q2R3Y1</accession>
<accession>A0A0P0Y2P8</accession>
<accession>Q2R3Y2</accession>
<feature type="chain" id="PRO_0000308247" description="Putative squamosa promoter-binding-like protein 19">
    <location>
        <begin position="1"/>
        <end position="352"/>
    </location>
</feature>
<feature type="zinc finger region" description="SBP-type" evidence="3">
    <location>
        <begin position="90"/>
        <end position="167"/>
    </location>
</feature>
<feature type="region of interest" description="Disordered" evidence="4">
    <location>
        <begin position="68"/>
        <end position="88"/>
    </location>
</feature>
<feature type="region of interest" description="Disordered" evidence="4">
    <location>
        <begin position="152"/>
        <end position="174"/>
    </location>
</feature>
<feature type="short sequence motif" description="Bipartite nuclear localization signal" evidence="2">
    <location>
        <begin position="150"/>
        <end position="166"/>
    </location>
</feature>
<feature type="compositionally biased region" description="Gly residues" evidence="4">
    <location>
        <begin position="78"/>
        <end position="88"/>
    </location>
</feature>
<feature type="binding site" evidence="3">
    <location>
        <position position="93"/>
    </location>
    <ligand>
        <name>Zn(2+)</name>
        <dbReference type="ChEBI" id="CHEBI:29105"/>
        <label>1</label>
    </ligand>
</feature>
<feature type="binding site" evidence="3">
    <location>
        <position position="98"/>
    </location>
    <ligand>
        <name>Zn(2+)</name>
        <dbReference type="ChEBI" id="CHEBI:29105"/>
        <label>1</label>
    </ligand>
</feature>
<feature type="binding site" evidence="3">
    <location>
        <position position="115"/>
    </location>
    <ligand>
        <name>Zn(2+)</name>
        <dbReference type="ChEBI" id="CHEBI:29105"/>
        <label>1</label>
    </ligand>
</feature>
<feature type="binding site" evidence="3">
    <location>
        <position position="118"/>
    </location>
    <ligand>
        <name>Zn(2+)</name>
        <dbReference type="ChEBI" id="CHEBI:29105"/>
        <label>1</label>
    </ligand>
</feature>
<feature type="binding site" evidence="3">
    <location>
        <position position="134"/>
    </location>
    <ligand>
        <name>Zn(2+)</name>
        <dbReference type="ChEBI" id="CHEBI:29105"/>
        <label>2</label>
    </ligand>
</feature>
<feature type="binding site" evidence="3">
    <location>
        <position position="137"/>
    </location>
    <ligand>
        <name>Zn(2+)</name>
        <dbReference type="ChEBI" id="CHEBI:29105"/>
        <label>2</label>
    </ligand>
</feature>
<feature type="binding site" evidence="3">
    <location>
        <position position="141"/>
    </location>
    <ligand>
        <name>Zn(2+)</name>
        <dbReference type="ChEBI" id="CHEBI:29105"/>
        <label>2</label>
    </ligand>
</feature>
<feature type="binding site" evidence="3">
    <location>
        <position position="153"/>
    </location>
    <ligand>
        <name>Zn(2+)</name>
        <dbReference type="ChEBI" id="CHEBI:29105"/>
        <label>2</label>
    </ligand>
</feature>
<comment type="function">
    <text evidence="1">Trans-acting factor that binds specifically to the consensus nucleotide sequence 5'-TNCGTACAA-3'.</text>
</comment>
<comment type="subcellular location">
    <subcellularLocation>
        <location evidence="5">Nucleus</location>
    </subcellularLocation>
</comment>
<comment type="domain">
    <text evidence="1">The SBP-type zinc finger is required for the binding to DNA.</text>
</comment>
<comment type="sequence caution" evidence="5">
    <conflict type="erroneous gene model prediction">
        <sequence resource="EMBL-CDS" id="ABA93772"/>
    </conflict>
    <text>Was originally thought to correspond to two different genes Os11g0496600 and Os11g0496700.</text>
</comment>
<comment type="sequence caution" evidence="5">
    <conflict type="erroneous gene model prediction">
        <sequence resource="EMBL-CDS" id="ABA93773"/>
    </conflict>
    <text>Was originally thought to correspond to two different genes Os11g0496600 and Os11g0496700.</text>
</comment>
<comment type="sequence caution" evidence="5">
    <conflict type="erroneous gene model prediction">
        <sequence resource="EMBL-CDS" id="EAZ18431"/>
    </conflict>
    <text>Was originally thought to correspond to two different genes Os11g0496600 and Os11g0496700.</text>
</comment>
<protein>
    <recommendedName>
        <fullName>Putative squamosa promoter-binding-like protein 19</fullName>
    </recommendedName>
</protein>
<name>SPL19_ORYSJ</name>
<reference key="1">
    <citation type="journal article" date="2005" name="BMC Biol.">
        <title>The sequence of rice chromosomes 11 and 12, rich in disease resistance genes and recent gene duplications.</title>
        <authorList>
            <consortium name="The rice chromosomes 11 and 12 sequencing consortia"/>
        </authorList>
    </citation>
    <scope>NUCLEOTIDE SEQUENCE [LARGE SCALE GENOMIC DNA]</scope>
    <source>
        <strain>cv. Nipponbare</strain>
    </source>
</reference>
<reference key="2">
    <citation type="journal article" date="2005" name="Nature">
        <title>The map-based sequence of the rice genome.</title>
        <authorList>
            <consortium name="International rice genome sequencing project (IRGSP)"/>
        </authorList>
    </citation>
    <scope>NUCLEOTIDE SEQUENCE [LARGE SCALE GENOMIC DNA]</scope>
    <source>
        <strain>cv. Nipponbare</strain>
    </source>
</reference>
<reference key="3">
    <citation type="journal article" date="2008" name="Nucleic Acids Res.">
        <title>The rice annotation project database (RAP-DB): 2008 update.</title>
        <authorList>
            <consortium name="The rice annotation project (RAP)"/>
        </authorList>
    </citation>
    <scope>GENOME REANNOTATION</scope>
    <source>
        <strain>cv. Nipponbare</strain>
    </source>
</reference>
<reference key="4">
    <citation type="journal article" date="2013" name="Rice">
        <title>Improvement of the Oryza sativa Nipponbare reference genome using next generation sequence and optical map data.</title>
        <authorList>
            <person name="Kawahara Y."/>
            <person name="de la Bastide M."/>
            <person name="Hamilton J.P."/>
            <person name="Kanamori H."/>
            <person name="McCombie W.R."/>
            <person name="Ouyang S."/>
            <person name="Schwartz D.C."/>
            <person name="Tanaka T."/>
            <person name="Wu J."/>
            <person name="Zhou S."/>
            <person name="Childs K.L."/>
            <person name="Davidson R.M."/>
            <person name="Lin H."/>
            <person name="Quesada-Ocampo L."/>
            <person name="Vaillancourt B."/>
            <person name="Sakai H."/>
            <person name="Lee S.S."/>
            <person name="Kim J."/>
            <person name="Numa H."/>
            <person name="Itoh T."/>
            <person name="Buell C.R."/>
            <person name="Matsumoto T."/>
        </authorList>
    </citation>
    <scope>GENOME REANNOTATION</scope>
    <source>
        <strain>cv. Nipponbare</strain>
    </source>
</reference>
<reference key="5">
    <citation type="journal article" date="2005" name="PLoS Biol.">
        <title>The genomes of Oryza sativa: a history of duplications.</title>
        <authorList>
            <person name="Yu J."/>
            <person name="Wang J."/>
            <person name="Lin W."/>
            <person name="Li S."/>
            <person name="Li H."/>
            <person name="Zhou J."/>
            <person name="Ni P."/>
            <person name="Dong W."/>
            <person name="Hu S."/>
            <person name="Zeng C."/>
            <person name="Zhang J."/>
            <person name="Zhang Y."/>
            <person name="Li R."/>
            <person name="Xu Z."/>
            <person name="Li S."/>
            <person name="Li X."/>
            <person name="Zheng H."/>
            <person name="Cong L."/>
            <person name="Lin L."/>
            <person name="Yin J."/>
            <person name="Geng J."/>
            <person name="Li G."/>
            <person name="Shi J."/>
            <person name="Liu J."/>
            <person name="Lv H."/>
            <person name="Li J."/>
            <person name="Wang J."/>
            <person name="Deng Y."/>
            <person name="Ran L."/>
            <person name="Shi X."/>
            <person name="Wang X."/>
            <person name="Wu Q."/>
            <person name="Li C."/>
            <person name="Ren X."/>
            <person name="Wang J."/>
            <person name="Wang X."/>
            <person name="Li D."/>
            <person name="Liu D."/>
            <person name="Zhang X."/>
            <person name="Ji Z."/>
            <person name="Zhao W."/>
            <person name="Sun Y."/>
            <person name="Zhang Z."/>
            <person name="Bao J."/>
            <person name="Han Y."/>
            <person name="Dong L."/>
            <person name="Ji J."/>
            <person name="Chen P."/>
            <person name="Wu S."/>
            <person name="Liu J."/>
            <person name="Xiao Y."/>
            <person name="Bu D."/>
            <person name="Tan J."/>
            <person name="Yang L."/>
            <person name="Ye C."/>
            <person name="Zhang J."/>
            <person name="Xu J."/>
            <person name="Zhou Y."/>
            <person name="Yu Y."/>
            <person name="Zhang B."/>
            <person name="Zhuang S."/>
            <person name="Wei H."/>
            <person name="Liu B."/>
            <person name="Lei M."/>
            <person name="Yu H."/>
            <person name="Li Y."/>
            <person name="Xu H."/>
            <person name="Wei S."/>
            <person name="He X."/>
            <person name="Fang L."/>
            <person name="Zhang Z."/>
            <person name="Zhang Y."/>
            <person name="Huang X."/>
            <person name="Su Z."/>
            <person name="Tong W."/>
            <person name="Li J."/>
            <person name="Tong Z."/>
            <person name="Li S."/>
            <person name="Ye J."/>
            <person name="Wang L."/>
            <person name="Fang L."/>
            <person name="Lei T."/>
            <person name="Chen C.-S."/>
            <person name="Chen H.-C."/>
            <person name="Xu Z."/>
            <person name="Li H."/>
            <person name="Huang H."/>
            <person name="Zhang F."/>
            <person name="Xu H."/>
            <person name="Li N."/>
            <person name="Zhao C."/>
            <person name="Li S."/>
            <person name="Dong L."/>
            <person name="Huang Y."/>
            <person name="Li L."/>
            <person name="Xi Y."/>
            <person name="Qi Q."/>
            <person name="Li W."/>
            <person name="Zhang B."/>
            <person name="Hu W."/>
            <person name="Zhang Y."/>
            <person name="Tian X."/>
            <person name="Jiao Y."/>
            <person name="Liang X."/>
            <person name="Jin J."/>
            <person name="Gao L."/>
            <person name="Zheng W."/>
            <person name="Hao B."/>
            <person name="Liu S.-M."/>
            <person name="Wang W."/>
            <person name="Yuan L."/>
            <person name="Cao M."/>
            <person name="McDermott J."/>
            <person name="Samudrala R."/>
            <person name="Wang J."/>
            <person name="Wong G.K.-S."/>
            <person name="Yang H."/>
        </authorList>
    </citation>
    <scope>NUCLEOTIDE SEQUENCE [LARGE SCALE GENOMIC DNA]</scope>
    <source>
        <strain>cv. Nipponbare</strain>
    </source>
</reference>
<reference key="6">
    <citation type="journal article" date="2006" name="Plant Physiol.">
        <title>Genomic organization, differential expression, and interaction of SQUAMOSA promoter-binding-like transcription factors and microRNA156 in rice.</title>
        <authorList>
            <person name="Xie K."/>
            <person name="Wu C."/>
            <person name="Xiong L."/>
        </authorList>
    </citation>
    <scope>GENE FAMILY</scope>
    <scope>NOMENCLATURE</scope>
</reference>
<reference key="7">
    <citation type="journal article" date="2008" name="Gene">
        <title>Comparative study of SBP-box gene family in Arabidopsis and rice.</title>
        <authorList>
            <person name="Yang Z."/>
            <person name="Wang X."/>
            <person name="Gu S."/>
            <person name="Hu Z."/>
            <person name="Xu H."/>
            <person name="Xu C."/>
        </authorList>
    </citation>
    <scope>GENE FAMILY</scope>
</reference>
<keyword id="KW-0238">DNA-binding</keyword>
<keyword id="KW-0479">Metal-binding</keyword>
<keyword id="KW-0539">Nucleus</keyword>
<keyword id="KW-1185">Reference proteome</keyword>
<keyword id="KW-0804">Transcription</keyword>
<keyword id="KW-0805">Transcription regulation</keyword>
<keyword id="KW-0862">Zinc</keyword>
<keyword id="KW-0863">Zinc-finger</keyword>
<proteinExistence type="inferred from homology"/>
<organism>
    <name type="scientific">Oryza sativa subsp. japonica</name>
    <name type="common">Rice</name>
    <dbReference type="NCBI Taxonomy" id="39947"/>
    <lineage>
        <taxon>Eukaryota</taxon>
        <taxon>Viridiplantae</taxon>
        <taxon>Streptophyta</taxon>
        <taxon>Embryophyta</taxon>
        <taxon>Tracheophyta</taxon>
        <taxon>Spermatophyta</taxon>
        <taxon>Magnoliopsida</taxon>
        <taxon>Liliopsida</taxon>
        <taxon>Poales</taxon>
        <taxon>Poaceae</taxon>
        <taxon>BOP clade</taxon>
        <taxon>Oryzoideae</taxon>
        <taxon>Oryzeae</taxon>
        <taxon>Oryzinae</taxon>
        <taxon>Oryza</taxon>
        <taxon>Oryza sativa</taxon>
    </lineage>
</organism>
<evidence type="ECO:0000250" key="1"/>
<evidence type="ECO:0000255" key="2"/>
<evidence type="ECO:0000255" key="3">
    <source>
        <dbReference type="PROSITE-ProRule" id="PRU00470"/>
    </source>
</evidence>
<evidence type="ECO:0000256" key="4">
    <source>
        <dbReference type="SAM" id="MobiDB-lite"/>
    </source>
</evidence>
<evidence type="ECO:0000305" key="5"/>
<gene>
    <name type="primary">SPL19</name>
    <name type="ordered locus">Os11g0496600</name>
    <name type="ordered locus">Os11g0496700</name>
    <name type="ordered locus">LOC_Os11g30370</name>
    <name type="ordered locus">LOC_Os11g30380</name>
    <name type="ORF">OsJ_032640</name>
</gene>
<dbReference type="EMBL" id="DP000010">
    <property type="protein sequence ID" value="ABA93772.1"/>
    <property type="status" value="ALT_SEQ"/>
    <property type="molecule type" value="Genomic_DNA"/>
</dbReference>
<dbReference type="EMBL" id="DP000010">
    <property type="protein sequence ID" value="ABA93773.1"/>
    <property type="status" value="ALT_SEQ"/>
    <property type="molecule type" value="Genomic_DNA"/>
</dbReference>
<dbReference type="EMBL" id="AP008217">
    <property type="status" value="NOT_ANNOTATED_CDS"/>
    <property type="molecule type" value="Genomic_DNA"/>
</dbReference>
<dbReference type="EMBL" id="AP014967">
    <property type="protein sequence ID" value="BAT14119.1"/>
    <property type="molecule type" value="Genomic_DNA"/>
</dbReference>
<dbReference type="EMBL" id="CM000148">
    <property type="protein sequence ID" value="EAZ18431.1"/>
    <property type="status" value="ALT_SEQ"/>
    <property type="molecule type" value="Genomic_DNA"/>
</dbReference>
<dbReference type="SMR" id="Q2R3Y1"/>
<dbReference type="STRING" id="39947.Q2R3Y1"/>
<dbReference type="PaxDb" id="39947-Q2R3Y1"/>
<dbReference type="EnsemblPlants" id="Os11t0496600-00">
    <property type="protein sequence ID" value="Os11t0496600-00"/>
    <property type="gene ID" value="Os11g0496600"/>
</dbReference>
<dbReference type="GeneID" id="107276349"/>
<dbReference type="Gramene" id="Os11t0496600-00">
    <property type="protein sequence ID" value="Os11t0496600-00"/>
    <property type="gene ID" value="Os11g0496600"/>
</dbReference>
<dbReference type="KEGG" id="osa:107276349"/>
<dbReference type="eggNOG" id="ENOG502QRGA">
    <property type="taxonomic scope" value="Eukaryota"/>
</dbReference>
<dbReference type="HOGENOM" id="CLU_042475_0_0_1"/>
<dbReference type="InParanoid" id="Q2R3Y1"/>
<dbReference type="OMA" id="FPIADQN"/>
<dbReference type="OrthoDB" id="514967at2759"/>
<dbReference type="Proteomes" id="UP000000763">
    <property type="component" value="Chromosome 11"/>
</dbReference>
<dbReference type="Proteomes" id="UP000007752">
    <property type="component" value="Chromosome 11"/>
</dbReference>
<dbReference type="Proteomes" id="UP000059680">
    <property type="component" value="Chromosome 11"/>
</dbReference>
<dbReference type="GO" id="GO:0005634">
    <property type="term" value="C:nucleus"/>
    <property type="evidence" value="ECO:0007669"/>
    <property type="project" value="UniProtKB-SubCell"/>
</dbReference>
<dbReference type="GO" id="GO:0003677">
    <property type="term" value="F:DNA binding"/>
    <property type="evidence" value="ECO:0007669"/>
    <property type="project" value="UniProtKB-KW"/>
</dbReference>
<dbReference type="GO" id="GO:0008270">
    <property type="term" value="F:zinc ion binding"/>
    <property type="evidence" value="ECO:0007669"/>
    <property type="project" value="UniProtKB-KW"/>
</dbReference>
<dbReference type="FunFam" id="4.10.1100.10:FF:000001">
    <property type="entry name" value="Squamosa promoter-binding-like protein 14"/>
    <property type="match status" value="1"/>
</dbReference>
<dbReference type="Gene3D" id="4.10.1100.10">
    <property type="entry name" value="Transcription factor, SBP-box domain"/>
    <property type="match status" value="1"/>
</dbReference>
<dbReference type="InterPro" id="IPR044817">
    <property type="entry name" value="SBP-like"/>
</dbReference>
<dbReference type="InterPro" id="IPR004333">
    <property type="entry name" value="SBP_dom"/>
</dbReference>
<dbReference type="InterPro" id="IPR036893">
    <property type="entry name" value="SBP_sf"/>
</dbReference>
<dbReference type="PANTHER" id="PTHR31251:SF186">
    <property type="entry name" value="SQUAMOSA PROMOTER-BINDING-LIKE PROTEIN 19-RELATED"/>
    <property type="match status" value="1"/>
</dbReference>
<dbReference type="PANTHER" id="PTHR31251">
    <property type="entry name" value="SQUAMOSA PROMOTER-BINDING-LIKE PROTEIN 4"/>
    <property type="match status" value="1"/>
</dbReference>
<dbReference type="Pfam" id="PF03110">
    <property type="entry name" value="SBP"/>
    <property type="match status" value="1"/>
</dbReference>
<dbReference type="SUPFAM" id="SSF103612">
    <property type="entry name" value="SBT domain"/>
    <property type="match status" value="1"/>
</dbReference>
<dbReference type="PROSITE" id="PS51141">
    <property type="entry name" value="ZF_SBP"/>
    <property type="match status" value="1"/>
</dbReference>
<sequence>MEWAAAATKAASWGMAVAAAAAADDAGPTMLSFAGPSSSSSSPDAAAAAAAAAAAALHDFSVRARPAAAAPATRRARGGSGGGGGGGGGAEACSVDGCRSDLSRCRDYHRRHKVCEAHAKTPVVVVAGQEQRFCQQCSRFHNLAEFDDGKKSCRKRLDGHNRRRRKPQHDALNPRSFLPYHQANQFSVYPQTFPIADQNADALMRPLDRHPPFSISFSGTFREPKQFPFMQDGGSGLGAARHDLLRPFSSPEDGANITTTRSACNGVPHGLDPECALSLLSSSLHPSPAAGISSATAPPQFAPSSFSRIAASSQAVTTAFASDGGSVAGDHVLVPAVTYEDPSQAMPFSWQV</sequence>